<comment type="function">
    <text evidence="1">Cell wall formation. Adds enolpyruvyl to UDP-N-acetylglucosamine.</text>
</comment>
<comment type="catalytic activity">
    <reaction evidence="1">
        <text>phosphoenolpyruvate + UDP-N-acetyl-alpha-D-glucosamine = UDP-N-acetyl-3-O-(1-carboxyvinyl)-alpha-D-glucosamine + phosphate</text>
        <dbReference type="Rhea" id="RHEA:18681"/>
        <dbReference type="ChEBI" id="CHEBI:43474"/>
        <dbReference type="ChEBI" id="CHEBI:57705"/>
        <dbReference type="ChEBI" id="CHEBI:58702"/>
        <dbReference type="ChEBI" id="CHEBI:68483"/>
        <dbReference type="EC" id="2.5.1.7"/>
    </reaction>
</comment>
<comment type="pathway">
    <text evidence="1">Cell wall biogenesis; peptidoglycan biosynthesis.</text>
</comment>
<comment type="subcellular location">
    <subcellularLocation>
        <location evidence="1">Cytoplasm</location>
    </subcellularLocation>
</comment>
<comment type="similarity">
    <text evidence="1">Belongs to the EPSP synthase family. MurA subfamily.</text>
</comment>
<name>MURA2_STAAM</name>
<reference key="1">
    <citation type="journal article" date="2001" name="Lancet">
        <title>Whole genome sequencing of meticillin-resistant Staphylococcus aureus.</title>
        <authorList>
            <person name="Kuroda M."/>
            <person name="Ohta T."/>
            <person name="Uchiyama I."/>
            <person name="Baba T."/>
            <person name="Yuzawa H."/>
            <person name="Kobayashi I."/>
            <person name="Cui L."/>
            <person name="Oguchi A."/>
            <person name="Aoki K."/>
            <person name="Nagai Y."/>
            <person name="Lian J.-Q."/>
            <person name="Ito T."/>
            <person name="Kanamori M."/>
            <person name="Matsumaru H."/>
            <person name="Maruyama A."/>
            <person name="Murakami H."/>
            <person name="Hosoyama A."/>
            <person name="Mizutani-Ui Y."/>
            <person name="Takahashi N.K."/>
            <person name="Sawano T."/>
            <person name="Inoue R."/>
            <person name="Kaito C."/>
            <person name="Sekimizu K."/>
            <person name="Hirakawa H."/>
            <person name="Kuhara S."/>
            <person name="Goto S."/>
            <person name="Yabuzaki J."/>
            <person name="Kanehisa M."/>
            <person name="Yamashita A."/>
            <person name="Oshima K."/>
            <person name="Furuya K."/>
            <person name="Yoshino C."/>
            <person name="Shiba T."/>
            <person name="Hattori M."/>
            <person name="Ogasawara N."/>
            <person name="Hayashi H."/>
            <person name="Hiramatsu K."/>
        </authorList>
    </citation>
    <scope>NUCLEOTIDE SEQUENCE [LARGE SCALE GENOMIC DNA]</scope>
    <source>
        <strain>Mu50 / ATCC 700699</strain>
    </source>
</reference>
<keyword id="KW-0131">Cell cycle</keyword>
<keyword id="KW-0132">Cell division</keyword>
<keyword id="KW-0133">Cell shape</keyword>
<keyword id="KW-0961">Cell wall biogenesis/degradation</keyword>
<keyword id="KW-0963">Cytoplasm</keyword>
<keyword id="KW-0573">Peptidoglycan synthesis</keyword>
<keyword id="KW-0670">Pyruvate</keyword>
<keyword id="KW-0808">Transferase</keyword>
<sequence>MAQEVIKIRGGRTLNGEVNISGAKNSAVAIIPATLLAQGHVKLEGLPQISDVKTLVSLLEDLNIKASLNGTELEVDTTEIQNAALPNNKVESLRASYYMMGAMLGRFKKCVIGLPGGCPLGPRPIDQHIKGFKALGAEIDESSTTSMKIEAKELKGAHIFLDMVSVGATINIMLAAVYATGQTVIENAAKEPEVVDVANFLTSMGANIKGAGTSTIKINGVKELHGSEYQVIPDRIEAGTYMCIAAACGENVILNNIVPKHVETLTAKFSELGVNVDVRDERIRINNNAPYQFVDIKTLVYPGFATDLQQPITPLLFMANGPSFVTDTIYPERFKHVEELKRMGANIEVDEGTATIKPSTLHGAEVYASDLRAGACLIIAGLIAEGVTTIYNVKHIYRGYTDIVEHLKALGADIWTETV</sequence>
<dbReference type="EC" id="2.5.1.7" evidence="1"/>
<dbReference type="EMBL" id="BA000017">
    <property type="protein sequence ID" value="BAB58286.1"/>
    <property type="molecule type" value="Genomic_DNA"/>
</dbReference>
<dbReference type="RefSeq" id="WP_000046602.1">
    <property type="nucleotide sequence ID" value="NC_002758.2"/>
</dbReference>
<dbReference type="SMR" id="P65456"/>
<dbReference type="BindingDB" id="P65456"/>
<dbReference type="KEGG" id="sav:SAV2124"/>
<dbReference type="HOGENOM" id="CLU_027387_0_0_9"/>
<dbReference type="PhylomeDB" id="P65456"/>
<dbReference type="SABIO-RK" id="P65456"/>
<dbReference type="UniPathway" id="UPA00219"/>
<dbReference type="Proteomes" id="UP000002481">
    <property type="component" value="Chromosome"/>
</dbReference>
<dbReference type="GO" id="GO:0005737">
    <property type="term" value="C:cytoplasm"/>
    <property type="evidence" value="ECO:0007669"/>
    <property type="project" value="UniProtKB-SubCell"/>
</dbReference>
<dbReference type="GO" id="GO:0008760">
    <property type="term" value="F:UDP-N-acetylglucosamine 1-carboxyvinyltransferase activity"/>
    <property type="evidence" value="ECO:0007669"/>
    <property type="project" value="UniProtKB-UniRule"/>
</dbReference>
<dbReference type="GO" id="GO:0051301">
    <property type="term" value="P:cell division"/>
    <property type="evidence" value="ECO:0007669"/>
    <property type="project" value="UniProtKB-KW"/>
</dbReference>
<dbReference type="GO" id="GO:0071555">
    <property type="term" value="P:cell wall organization"/>
    <property type="evidence" value="ECO:0007669"/>
    <property type="project" value="UniProtKB-KW"/>
</dbReference>
<dbReference type="GO" id="GO:0009252">
    <property type="term" value="P:peptidoglycan biosynthetic process"/>
    <property type="evidence" value="ECO:0007669"/>
    <property type="project" value="UniProtKB-UniRule"/>
</dbReference>
<dbReference type="GO" id="GO:0008360">
    <property type="term" value="P:regulation of cell shape"/>
    <property type="evidence" value="ECO:0007669"/>
    <property type="project" value="UniProtKB-KW"/>
</dbReference>
<dbReference type="GO" id="GO:0019277">
    <property type="term" value="P:UDP-N-acetylgalactosamine biosynthetic process"/>
    <property type="evidence" value="ECO:0007669"/>
    <property type="project" value="InterPro"/>
</dbReference>
<dbReference type="CDD" id="cd01555">
    <property type="entry name" value="UdpNAET"/>
    <property type="match status" value="1"/>
</dbReference>
<dbReference type="FunFam" id="3.65.10.10:FF:000001">
    <property type="entry name" value="UDP-N-acetylglucosamine 1-carboxyvinyltransferase"/>
    <property type="match status" value="1"/>
</dbReference>
<dbReference type="Gene3D" id="3.65.10.10">
    <property type="entry name" value="Enolpyruvate transferase domain"/>
    <property type="match status" value="2"/>
</dbReference>
<dbReference type="HAMAP" id="MF_00111">
    <property type="entry name" value="MurA"/>
    <property type="match status" value="1"/>
</dbReference>
<dbReference type="InterPro" id="IPR001986">
    <property type="entry name" value="Enolpyruvate_Tfrase_dom"/>
</dbReference>
<dbReference type="InterPro" id="IPR036968">
    <property type="entry name" value="Enolpyruvate_Tfrase_sf"/>
</dbReference>
<dbReference type="InterPro" id="IPR050068">
    <property type="entry name" value="MurA_subfamily"/>
</dbReference>
<dbReference type="InterPro" id="IPR013792">
    <property type="entry name" value="RNA3'P_cycl/enolpyr_Trfase_a/b"/>
</dbReference>
<dbReference type="InterPro" id="IPR005750">
    <property type="entry name" value="UDP_GlcNAc_COvinyl_MurA"/>
</dbReference>
<dbReference type="NCBIfam" id="TIGR01072">
    <property type="entry name" value="murA"/>
    <property type="match status" value="1"/>
</dbReference>
<dbReference type="NCBIfam" id="NF006873">
    <property type="entry name" value="PRK09369.1"/>
    <property type="match status" value="1"/>
</dbReference>
<dbReference type="NCBIfam" id="NF009470">
    <property type="entry name" value="PRK12830.1"/>
    <property type="match status" value="1"/>
</dbReference>
<dbReference type="PANTHER" id="PTHR43783">
    <property type="entry name" value="UDP-N-ACETYLGLUCOSAMINE 1-CARBOXYVINYLTRANSFERASE"/>
    <property type="match status" value="1"/>
</dbReference>
<dbReference type="PANTHER" id="PTHR43783:SF2">
    <property type="entry name" value="UDP-N-ACETYLGLUCOSAMINE 1-CARBOXYVINYLTRANSFERASE 2"/>
    <property type="match status" value="1"/>
</dbReference>
<dbReference type="Pfam" id="PF00275">
    <property type="entry name" value="EPSP_synthase"/>
    <property type="match status" value="1"/>
</dbReference>
<dbReference type="SUPFAM" id="SSF55205">
    <property type="entry name" value="EPT/RTPC-like"/>
    <property type="match status" value="1"/>
</dbReference>
<gene>
    <name evidence="1" type="primary">murA2</name>
    <name type="synonym">murZ</name>
    <name type="ordered locus">SAV2124</name>
</gene>
<organism>
    <name type="scientific">Staphylococcus aureus (strain Mu50 / ATCC 700699)</name>
    <dbReference type="NCBI Taxonomy" id="158878"/>
    <lineage>
        <taxon>Bacteria</taxon>
        <taxon>Bacillati</taxon>
        <taxon>Bacillota</taxon>
        <taxon>Bacilli</taxon>
        <taxon>Bacillales</taxon>
        <taxon>Staphylococcaceae</taxon>
        <taxon>Staphylococcus</taxon>
    </lineage>
</organism>
<evidence type="ECO:0000255" key="1">
    <source>
        <dbReference type="HAMAP-Rule" id="MF_00111"/>
    </source>
</evidence>
<accession>P65456</accession>
<accession>Q99SD4</accession>
<protein>
    <recommendedName>
        <fullName evidence="1">UDP-N-acetylglucosamine 1-carboxyvinyltransferase 2</fullName>
        <ecNumber evidence="1">2.5.1.7</ecNumber>
    </recommendedName>
    <alternativeName>
        <fullName evidence="1">Enoylpyruvate transferase 2</fullName>
    </alternativeName>
    <alternativeName>
        <fullName evidence="1">UDP-N-acetylglucosamine enolpyruvyl transferase 2</fullName>
        <shortName evidence="1">EPT 2</shortName>
    </alternativeName>
</protein>
<proteinExistence type="inferred from homology"/>
<feature type="chain" id="PRO_0000178917" description="UDP-N-acetylglucosamine 1-carboxyvinyltransferase 2">
    <location>
        <begin position="1"/>
        <end position="419"/>
    </location>
</feature>
<feature type="active site" description="Proton donor" evidence="1">
    <location>
        <position position="118"/>
    </location>
</feature>
<feature type="binding site" evidence="1">
    <location>
        <begin position="24"/>
        <end position="25"/>
    </location>
    <ligand>
        <name>phosphoenolpyruvate</name>
        <dbReference type="ChEBI" id="CHEBI:58702"/>
    </ligand>
</feature>
<feature type="binding site" evidence="1">
    <location>
        <position position="94"/>
    </location>
    <ligand>
        <name>UDP-N-acetyl-alpha-D-glucosamine</name>
        <dbReference type="ChEBI" id="CHEBI:57705"/>
    </ligand>
</feature>
<feature type="binding site" evidence="1">
    <location>
        <begin position="123"/>
        <end position="127"/>
    </location>
    <ligand>
        <name>UDP-N-acetyl-alpha-D-glucosamine</name>
        <dbReference type="ChEBI" id="CHEBI:57705"/>
    </ligand>
</feature>
<feature type="binding site" evidence="1">
    <location>
        <position position="307"/>
    </location>
    <ligand>
        <name>UDP-N-acetyl-alpha-D-glucosamine</name>
        <dbReference type="ChEBI" id="CHEBI:57705"/>
    </ligand>
</feature>
<feature type="binding site" evidence="1">
    <location>
        <position position="329"/>
    </location>
    <ligand>
        <name>UDP-N-acetyl-alpha-D-glucosamine</name>
        <dbReference type="ChEBI" id="CHEBI:57705"/>
    </ligand>
</feature>
<feature type="modified residue" description="2-(S-cysteinyl)pyruvic acid O-phosphothioketal" evidence="1">
    <location>
        <position position="118"/>
    </location>
</feature>